<gene>
    <name type="ordered locus">Bcep18194_A5313</name>
</gene>
<protein>
    <recommendedName>
        <fullName evidence="1">Putative phosphoenolpyruvate synthase regulatory protein</fullName>
        <shortName evidence="1">PEP synthase regulatory protein</shortName>
        <shortName evidence="1">PSRP</shortName>
        <ecNumber evidence="1">2.7.11.33</ecNumber>
        <ecNumber evidence="1">2.7.4.28</ecNumber>
    </recommendedName>
    <alternativeName>
        <fullName evidence="1">Pyruvate, water dikinase regulatory protein</fullName>
    </alternativeName>
</protein>
<comment type="function">
    <text evidence="1">Bifunctional serine/threonine kinase and phosphorylase involved in the regulation of the phosphoenolpyruvate synthase (PEPS) by catalyzing its phosphorylation/dephosphorylation.</text>
</comment>
<comment type="catalytic activity">
    <reaction evidence="1">
        <text>[pyruvate, water dikinase] + ADP = [pyruvate, water dikinase]-phosphate + AMP + H(+)</text>
        <dbReference type="Rhea" id="RHEA:46020"/>
        <dbReference type="Rhea" id="RHEA-COMP:11425"/>
        <dbReference type="Rhea" id="RHEA-COMP:11426"/>
        <dbReference type="ChEBI" id="CHEBI:15378"/>
        <dbReference type="ChEBI" id="CHEBI:43176"/>
        <dbReference type="ChEBI" id="CHEBI:68546"/>
        <dbReference type="ChEBI" id="CHEBI:456215"/>
        <dbReference type="ChEBI" id="CHEBI:456216"/>
        <dbReference type="EC" id="2.7.11.33"/>
    </reaction>
</comment>
<comment type="catalytic activity">
    <reaction evidence="1">
        <text>[pyruvate, water dikinase]-phosphate + phosphate + H(+) = [pyruvate, water dikinase] + diphosphate</text>
        <dbReference type="Rhea" id="RHEA:48580"/>
        <dbReference type="Rhea" id="RHEA-COMP:11425"/>
        <dbReference type="Rhea" id="RHEA-COMP:11426"/>
        <dbReference type="ChEBI" id="CHEBI:15378"/>
        <dbReference type="ChEBI" id="CHEBI:33019"/>
        <dbReference type="ChEBI" id="CHEBI:43176"/>
        <dbReference type="ChEBI" id="CHEBI:43474"/>
        <dbReference type="ChEBI" id="CHEBI:68546"/>
        <dbReference type="EC" id="2.7.4.28"/>
    </reaction>
</comment>
<comment type="similarity">
    <text evidence="1">Belongs to the pyruvate, phosphate/water dikinase regulatory protein family. PSRP subfamily.</text>
</comment>
<accession>Q39F59</accession>
<feature type="chain" id="PRO_0000316653" description="Putative phosphoenolpyruvate synthase regulatory protein">
    <location>
        <begin position="1"/>
        <end position="271"/>
    </location>
</feature>
<feature type="binding site" evidence="1">
    <location>
        <begin position="151"/>
        <end position="158"/>
    </location>
    <ligand>
        <name>ADP</name>
        <dbReference type="ChEBI" id="CHEBI:456216"/>
    </ligand>
</feature>
<proteinExistence type="inferred from homology"/>
<sequence>MLPTVFIVSDGTGITAETFAHSILSQFDQKFRLVRVPFVDSLDKAYATVEKINEAAVHDGRRAIVFTTLVDSESNDIVKRSNALVLDMFQRFVEPLEQELELKSSHAMGRGHQNADTEEYKTRIEAINFSLAHDDGQSNRNLSEADVILVGVSRSGKTPTSLYLAMQYGVKAANYPLIPEDFERGKLPSALAAYSEKLFGLSIDPQRLSEIRNERRPGSKYAAPENCRYEINEAEAMMRREGIKWLSSTHKSIEEIATTILQEIRLDRQSY</sequence>
<evidence type="ECO:0000255" key="1">
    <source>
        <dbReference type="HAMAP-Rule" id="MF_01062"/>
    </source>
</evidence>
<organism>
    <name type="scientific">Burkholderia lata (strain ATCC 17760 / DSM 23089 / LMG 22485 / NCIMB 9086 / R18194 / 383)</name>
    <dbReference type="NCBI Taxonomy" id="482957"/>
    <lineage>
        <taxon>Bacteria</taxon>
        <taxon>Pseudomonadati</taxon>
        <taxon>Pseudomonadota</taxon>
        <taxon>Betaproteobacteria</taxon>
        <taxon>Burkholderiales</taxon>
        <taxon>Burkholderiaceae</taxon>
        <taxon>Burkholderia</taxon>
        <taxon>Burkholderia cepacia complex</taxon>
    </lineage>
</organism>
<keyword id="KW-0418">Kinase</keyword>
<keyword id="KW-0547">Nucleotide-binding</keyword>
<keyword id="KW-0723">Serine/threonine-protein kinase</keyword>
<keyword id="KW-0808">Transferase</keyword>
<dbReference type="EC" id="2.7.11.33" evidence="1"/>
<dbReference type="EC" id="2.7.4.28" evidence="1"/>
<dbReference type="EMBL" id="CP000151">
    <property type="protein sequence ID" value="ABB08907.1"/>
    <property type="molecule type" value="Genomic_DNA"/>
</dbReference>
<dbReference type="RefSeq" id="WP_011352445.1">
    <property type="nucleotide sequence ID" value="NZ_WNDV01000025.1"/>
</dbReference>
<dbReference type="SMR" id="Q39F59"/>
<dbReference type="GeneID" id="45095189"/>
<dbReference type="KEGG" id="bur:Bcep18194_A5313"/>
<dbReference type="HOGENOM" id="CLU_046206_1_0_4"/>
<dbReference type="Proteomes" id="UP000002705">
    <property type="component" value="Chromosome 1"/>
</dbReference>
<dbReference type="GO" id="GO:0043531">
    <property type="term" value="F:ADP binding"/>
    <property type="evidence" value="ECO:0007669"/>
    <property type="project" value="UniProtKB-UniRule"/>
</dbReference>
<dbReference type="GO" id="GO:0005524">
    <property type="term" value="F:ATP binding"/>
    <property type="evidence" value="ECO:0007669"/>
    <property type="project" value="InterPro"/>
</dbReference>
<dbReference type="GO" id="GO:0016776">
    <property type="term" value="F:phosphotransferase activity, phosphate group as acceptor"/>
    <property type="evidence" value="ECO:0007669"/>
    <property type="project" value="UniProtKB-UniRule"/>
</dbReference>
<dbReference type="GO" id="GO:0004674">
    <property type="term" value="F:protein serine/threonine kinase activity"/>
    <property type="evidence" value="ECO:0007669"/>
    <property type="project" value="UniProtKB-UniRule"/>
</dbReference>
<dbReference type="HAMAP" id="MF_01062">
    <property type="entry name" value="PSRP"/>
    <property type="match status" value="1"/>
</dbReference>
<dbReference type="InterPro" id="IPR005177">
    <property type="entry name" value="Kinase-pyrophosphorylase"/>
</dbReference>
<dbReference type="InterPro" id="IPR026530">
    <property type="entry name" value="PSRP"/>
</dbReference>
<dbReference type="NCBIfam" id="NF003742">
    <property type="entry name" value="PRK05339.1"/>
    <property type="match status" value="1"/>
</dbReference>
<dbReference type="PANTHER" id="PTHR31756">
    <property type="entry name" value="PYRUVATE, PHOSPHATE DIKINASE REGULATORY PROTEIN 1, CHLOROPLASTIC"/>
    <property type="match status" value="1"/>
</dbReference>
<dbReference type="PANTHER" id="PTHR31756:SF3">
    <property type="entry name" value="PYRUVATE, PHOSPHATE DIKINASE REGULATORY PROTEIN 1, CHLOROPLASTIC"/>
    <property type="match status" value="1"/>
</dbReference>
<dbReference type="Pfam" id="PF03618">
    <property type="entry name" value="Kinase-PPPase"/>
    <property type="match status" value="1"/>
</dbReference>
<name>PSRP_BURL3</name>
<reference key="1">
    <citation type="submission" date="2005-10" db="EMBL/GenBank/DDBJ databases">
        <title>Complete sequence of chromosome 1 of Burkholderia sp. 383.</title>
        <authorList>
            <consortium name="US DOE Joint Genome Institute"/>
            <person name="Copeland A."/>
            <person name="Lucas S."/>
            <person name="Lapidus A."/>
            <person name="Barry K."/>
            <person name="Detter J.C."/>
            <person name="Glavina T."/>
            <person name="Hammon N."/>
            <person name="Israni S."/>
            <person name="Pitluck S."/>
            <person name="Chain P."/>
            <person name="Malfatti S."/>
            <person name="Shin M."/>
            <person name="Vergez L."/>
            <person name="Schmutz J."/>
            <person name="Larimer F."/>
            <person name="Land M."/>
            <person name="Kyrpides N."/>
            <person name="Lykidis A."/>
            <person name="Richardson P."/>
        </authorList>
    </citation>
    <scope>NUCLEOTIDE SEQUENCE [LARGE SCALE GENOMIC DNA]</scope>
    <source>
        <strain>ATCC 17760 / DSM 23089 / LMG 22485 / NCIMB 9086 / R18194 / 383</strain>
    </source>
</reference>